<proteinExistence type="inferred from homology"/>
<sequence length="249" mass="28482">MVSFDATEALAPYREGRGYGAIVFDRERLRQADASLFSPQSWGDRARPVDKGGRGGAWFVDAPFGRSVLRQYLRGGMAARVSRDRYLWKGAGRTRSFAEFRLMRELIKRKLPVPRPLAACYLREGLGYRAALLMERLENVRSLADHAQLAGRGAPWEATGQLIARFHRAGLDHPDLNAHNILFDAGGHGWLIDFDRGVLRIPATRWRERNLKRLHRSLLKLRGNRSGEDVDKDYERLHRAYELAWGRGY</sequence>
<accession>Q5H410</accession>
<keyword id="KW-0067">ATP-binding</keyword>
<keyword id="KW-0997">Cell inner membrane</keyword>
<keyword id="KW-1003">Cell membrane</keyword>
<keyword id="KW-0418">Kinase</keyword>
<keyword id="KW-0448">Lipopolysaccharide biosynthesis</keyword>
<keyword id="KW-0472">Membrane</keyword>
<keyword id="KW-0547">Nucleotide-binding</keyword>
<keyword id="KW-1185">Reference proteome</keyword>
<keyword id="KW-0808">Transferase</keyword>
<comment type="function">
    <text evidence="1">Catalyzes the ATP-dependent phosphorylation of the 3-deoxy-D-manno-octulosonic acid (Kdo) residue in Kdo-lipid IV(A) at the 4-OH position.</text>
</comment>
<comment type="catalytic activity">
    <reaction evidence="1">
        <text>an alpha-Kdo-(2-&gt;6)-lipid IVA + ATP = a 4-O-phospho-alpha-Kdo-(2-&gt;6)-lipid IVA + ADP + H(+)</text>
        <dbReference type="Rhea" id="RHEA:74271"/>
        <dbReference type="ChEBI" id="CHEBI:15378"/>
        <dbReference type="ChEBI" id="CHEBI:30616"/>
        <dbReference type="ChEBI" id="CHEBI:176428"/>
        <dbReference type="ChEBI" id="CHEBI:193140"/>
        <dbReference type="ChEBI" id="CHEBI:456216"/>
        <dbReference type="EC" id="2.7.1.166"/>
    </reaction>
</comment>
<comment type="pathway">
    <text evidence="1">Bacterial outer membrane biogenesis; LPS core biosynthesis.</text>
</comment>
<comment type="subcellular location">
    <subcellularLocation>
        <location evidence="1">Cell inner membrane</location>
        <topology evidence="1">Peripheral membrane protein</topology>
        <orientation evidence="1">Cytoplasmic side</orientation>
    </subcellularLocation>
</comment>
<comment type="similarity">
    <text evidence="1">Belongs to the protein kinase superfamily. KdkA/RfaP family.</text>
</comment>
<reference key="1">
    <citation type="journal article" date="2005" name="Nucleic Acids Res.">
        <title>The genome sequence of Xanthomonas oryzae pathovar oryzae KACC10331, the bacterial blight pathogen of rice.</title>
        <authorList>
            <person name="Lee B.-M."/>
            <person name="Park Y.-J."/>
            <person name="Park D.-S."/>
            <person name="Kang H.-W."/>
            <person name="Kim J.-G."/>
            <person name="Song E.-S."/>
            <person name="Park I.-C."/>
            <person name="Yoon U.-H."/>
            <person name="Hahn J.-H."/>
            <person name="Koo B.-S."/>
            <person name="Lee G.-B."/>
            <person name="Kim H."/>
            <person name="Park H.-S."/>
            <person name="Yoon K.-O."/>
            <person name="Kim J.-H."/>
            <person name="Jung C.-H."/>
            <person name="Koh N.-H."/>
            <person name="Seo J.-S."/>
            <person name="Go S.-J."/>
        </authorList>
    </citation>
    <scope>NUCLEOTIDE SEQUENCE [LARGE SCALE GENOMIC DNA]</scope>
    <source>
        <strain>KACC10331 / KXO85</strain>
    </source>
</reference>
<feature type="chain" id="PRO_0000263417" description="3-deoxy-D-manno-octulosonic acid kinase">
    <location>
        <begin position="1"/>
        <end position="249"/>
    </location>
</feature>
<feature type="active site" evidence="1">
    <location>
        <position position="175"/>
    </location>
</feature>
<protein>
    <recommendedName>
        <fullName evidence="1">3-deoxy-D-manno-octulosonic acid kinase</fullName>
        <shortName evidence="1">Kdo kinase</shortName>
        <ecNumber evidence="1">2.7.1.166</ecNumber>
    </recommendedName>
</protein>
<organism>
    <name type="scientific">Xanthomonas oryzae pv. oryzae (strain KACC10331 / KXO85)</name>
    <dbReference type="NCBI Taxonomy" id="291331"/>
    <lineage>
        <taxon>Bacteria</taxon>
        <taxon>Pseudomonadati</taxon>
        <taxon>Pseudomonadota</taxon>
        <taxon>Gammaproteobacteria</taxon>
        <taxon>Lysobacterales</taxon>
        <taxon>Lysobacteraceae</taxon>
        <taxon>Xanthomonas</taxon>
    </lineage>
</organism>
<dbReference type="EC" id="2.7.1.166" evidence="1"/>
<dbReference type="EMBL" id="AE013598">
    <property type="protein sequence ID" value="AAW74311.1"/>
    <property type="molecule type" value="Genomic_DNA"/>
</dbReference>
<dbReference type="SMR" id="Q5H410"/>
<dbReference type="STRING" id="291331.XOO1057"/>
<dbReference type="KEGG" id="xoo:XOO1057"/>
<dbReference type="HOGENOM" id="CLU_094226_0_0_6"/>
<dbReference type="UniPathway" id="UPA00958"/>
<dbReference type="Proteomes" id="UP000006735">
    <property type="component" value="Chromosome"/>
</dbReference>
<dbReference type="GO" id="GO:0005886">
    <property type="term" value="C:plasma membrane"/>
    <property type="evidence" value="ECO:0007669"/>
    <property type="project" value="UniProtKB-SubCell"/>
</dbReference>
<dbReference type="GO" id="GO:0005524">
    <property type="term" value="F:ATP binding"/>
    <property type="evidence" value="ECO:0007669"/>
    <property type="project" value="UniProtKB-UniRule"/>
</dbReference>
<dbReference type="GO" id="GO:0016301">
    <property type="term" value="F:kinase activity"/>
    <property type="evidence" value="ECO:0007669"/>
    <property type="project" value="UniProtKB-KW"/>
</dbReference>
<dbReference type="GO" id="GO:0016773">
    <property type="term" value="F:phosphotransferase activity, alcohol group as acceptor"/>
    <property type="evidence" value="ECO:0007669"/>
    <property type="project" value="UniProtKB-UniRule"/>
</dbReference>
<dbReference type="GO" id="GO:0009244">
    <property type="term" value="P:lipopolysaccharide core region biosynthetic process"/>
    <property type="evidence" value="ECO:0007669"/>
    <property type="project" value="UniProtKB-UniRule"/>
</dbReference>
<dbReference type="Gene3D" id="1.10.510.10">
    <property type="entry name" value="Transferase(Phosphotransferase) domain 1"/>
    <property type="match status" value="1"/>
</dbReference>
<dbReference type="HAMAP" id="MF_00521">
    <property type="entry name" value="KDO_kinase"/>
    <property type="match status" value="1"/>
</dbReference>
<dbReference type="InterPro" id="IPR022826">
    <property type="entry name" value="KDO_kinase"/>
</dbReference>
<dbReference type="InterPro" id="IPR011009">
    <property type="entry name" value="Kinase-like_dom_sf"/>
</dbReference>
<dbReference type="NCBIfam" id="NF002475">
    <property type="entry name" value="PRK01723.1"/>
    <property type="match status" value="1"/>
</dbReference>
<dbReference type="Pfam" id="PF06293">
    <property type="entry name" value="Kdo"/>
    <property type="match status" value="1"/>
</dbReference>
<dbReference type="SUPFAM" id="SSF56112">
    <property type="entry name" value="Protein kinase-like (PK-like)"/>
    <property type="match status" value="1"/>
</dbReference>
<gene>
    <name evidence="1" type="primary">kdkA</name>
    <name type="ordered locus">XOO1057</name>
</gene>
<name>KDKA_XANOR</name>
<evidence type="ECO:0000255" key="1">
    <source>
        <dbReference type="HAMAP-Rule" id="MF_00521"/>
    </source>
</evidence>